<gene>
    <name type="primary">ZNF416</name>
</gene>
<evidence type="ECO:0000255" key="1">
    <source>
        <dbReference type="PROSITE-ProRule" id="PRU00042"/>
    </source>
</evidence>
<evidence type="ECO:0000255" key="2">
    <source>
        <dbReference type="PROSITE-ProRule" id="PRU00119"/>
    </source>
</evidence>
<evidence type="ECO:0000256" key="3">
    <source>
        <dbReference type="SAM" id="MobiDB-lite"/>
    </source>
</evidence>
<evidence type="ECO:0000305" key="4"/>
<sequence>MAAAVLRDSTSVPVTAEAKLMGFTQGCVTFEDVAIYFSQEEWGLLDEAQRLLYRDVMLENFALITALVCWHGMEDEETPEQSVSVEGVPQVRTPEASPSTQKIQSCDMCVPFLTDILHLTDLPGQELYLTGACAVFHQDQKHHSAEKPLESDMDKASFVQCCLFHESGMPFTSSEVGKDFLAPLGILQPQAIANYEKPNKISKCEEAFHVGISHYKWSQCRRESSHKHTFFHPRVCTGKRLYESSKCGKACCCECSLVQLQRVHPGERPYECSECGKSFSQTSHLNDHRRIHTGERPYVCGQCGKSFSQRATLIKHHRVHTGERPYECGECGKSFSQSSNLIEHCRIHTGERPYECDECGKAFGSKSTLVRHQRTHTGEKPYECGECGKLFRQSFSLVVHQRIHTTARPYECGQCGKSFSLKCGLIQHQLIHSGARPFECDECGKSFSQRTTLNKHHKVHTAERPYVCGECGKAFMFKSKLVRHQRTHTGERPFECSECGKFFRQSYTLVEHQKIHTGLRPYDCGQCGKSFIQKSSLIQHQVVHTGERPYECGKCGKSFTQHSGLILHRKSHTVERPRDSSKCGKPYSPRSNIV</sequence>
<organism>
    <name type="scientific">Homo sapiens</name>
    <name type="common">Human</name>
    <dbReference type="NCBI Taxonomy" id="9606"/>
    <lineage>
        <taxon>Eukaryota</taxon>
        <taxon>Metazoa</taxon>
        <taxon>Chordata</taxon>
        <taxon>Craniata</taxon>
        <taxon>Vertebrata</taxon>
        <taxon>Euteleostomi</taxon>
        <taxon>Mammalia</taxon>
        <taxon>Eutheria</taxon>
        <taxon>Euarchontoglires</taxon>
        <taxon>Primates</taxon>
        <taxon>Haplorrhini</taxon>
        <taxon>Catarrhini</taxon>
        <taxon>Hominidae</taxon>
        <taxon>Homo</taxon>
    </lineage>
</organism>
<accession>Q9BWM5</accession>
<accession>Q9NWW8</accession>
<name>ZN416_HUMAN</name>
<comment type="function">
    <text>May be involved in transcriptional regulation.</text>
</comment>
<comment type="subcellular location">
    <subcellularLocation>
        <location evidence="4">Nucleus</location>
    </subcellularLocation>
</comment>
<comment type="similarity">
    <text evidence="4">Belongs to the krueppel C2H2-type zinc-finger protein family.</text>
</comment>
<comment type="sequence caution" evidence="4">
    <conflict type="miscellaneous discrepancy">
        <sequence resource="EMBL-CDS" id="BAA91257"/>
    </conflict>
    <text>Contaminating sequence. Potential poly-A sequence.</text>
</comment>
<proteinExistence type="evidence at protein level"/>
<keyword id="KW-0238">DNA-binding</keyword>
<keyword id="KW-0479">Metal-binding</keyword>
<keyword id="KW-0539">Nucleus</keyword>
<keyword id="KW-1267">Proteomics identification</keyword>
<keyword id="KW-1185">Reference proteome</keyword>
<keyword id="KW-0677">Repeat</keyword>
<keyword id="KW-0804">Transcription</keyword>
<keyword id="KW-0805">Transcription regulation</keyword>
<keyword id="KW-0862">Zinc</keyword>
<keyword id="KW-0863">Zinc-finger</keyword>
<protein>
    <recommendedName>
        <fullName>Zinc finger protein 416</fullName>
    </recommendedName>
</protein>
<feature type="chain" id="PRO_0000233984" description="Zinc finger protein 416">
    <location>
        <begin position="1"/>
        <end position="594"/>
    </location>
</feature>
<feature type="domain" description="KRAB" evidence="2">
    <location>
        <begin position="28"/>
        <end position="111"/>
    </location>
</feature>
<feature type="zinc finger region" description="C2H2-type 1; degenerate" evidence="1">
    <location>
        <begin position="242"/>
        <end position="264"/>
    </location>
</feature>
<feature type="zinc finger region" description="C2H2-type 2" evidence="1">
    <location>
        <begin position="270"/>
        <end position="292"/>
    </location>
</feature>
<feature type="zinc finger region" description="C2H2-type 3" evidence="1">
    <location>
        <begin position="298"/>
        <end position="320"/>
    </location>
</feature>
<feature type="zinc finger region" description="C2H2-type 4" evidence="1">
    <location>
        <begin position="326"/>
        <end position="348"/>
    </location>
</feature>
<feature type="zinc finger region" description="C2H2-type 5" evidence="1">
    <location>
        <begin position="354"/>
        <end position="376"/>
    </location>
</feature>
<feature type="zinc finger region" description="C2H2-type 6" evidence="1">
    <location>
        <begin position="382"/>
        <end position="404"/>
    </location>
</feature>
<feature type="zinc finger region" description="C2H2-type 7" evidence="1">
    <location>
        <begin position="410"/>
        <end position="432"/>
    </location>
</feature>
<feature type="zinc finger region" description="C2H2-type 8" evidence="1">
    <location>
        <begin position="438"/>
        <end position="460"/>
    </location>
</feature>
<feature type="zinc finger region" description="C2H2-type 9" evidence="1">
    <location>
        <begin position="466"/>
        <end position="488"/>
    </location>
</feature>
<feature type="zinc finger region" description="C2H2-type 10" evidence="1">
    <location>
        <begin position="494"/>
        <end position="516"/>
    </location>
</feature>
<feature type="zinc finger region" description="C2H2-type 11" evidence="1">
    <location>
        <begin position="522"/>
        <end position="544"/>
    </location>
</feature>
<feature type="zinc finger region" description="C2H2-type 12" evidence="1">
    <location>
        <begin position="550"/>
        <end position="572"/>
    </location>
</feature>
<feature type="region of interest" description="Disordered" evidence="3">
    <location>
        <begin position="569"/>
        <end position="594"/>
    </location>
</feature>
<feature type="compositionally biased region" description="Basic and acidic residues" evidence="3">
    <location>
        <begin position="572"/>
        <end position="582"/>
    </location>
</feature>
<feature type="sequence conflict" description="In Ref. 2." evidence="4" ref="2">
    <original>E</original>
    <variation>I</variation>
    <location>
        <position position="463"/>
    </location>
</feature>
<reference key="1">
    <citation type="journal article" date="2004" name="Genome Res.">
        <title>The status, quality, and expansion of the NIH full-length cDNA project: the Mammalian Gene Collection (MGC).</title>
        <authorList>
            <consortium name="The MGC Project Team"/>
        </authorList>
    </citation>
    <scope>NUCLEOTIDE SEQUENCE [LARGE SCALE MRNA]</scope>
    <source>
        <tissue>Cervix</tissue>
    </source>
</reference>
<reference key="2">
    <citation type="journal article" date="2004" name="Nat. Genet.">
        <title>Complete sequencing and characterization of 21,243 full-length human cDNAs.</title>
        <authorList>
            <person name="Ota T."/>
            <person name="Suzuki Y."/>
            <person name="Nishikawa T."/>
            <person name="Otsuki T."/>
            <person name="Sugiyama T."/>
            <person name="Irie R."/>
            <person name="Wakamatsu A."/>
            <person name="Hayashi K."/>
            <person name="Sato H."/>
            <person name="Nagai K."/>
            <person name="Kimura K."/>
            <person name="Makita H."/>
            <person name="Sekine M."/>
            <person name="Obayashi M."/>
            <person name="Nishi T."/>
            <person name="Shibahara T."/>
            <person name="Tanaka T."/>
            <person name="Ishii S."/>
            <person name="Yamamoto J."/>
            <person name="Saito K."/>
            <person name="Kawai Y."/>
            <person name="Isono Y."/>
            <person name="Nakamura Y."/>
            <person name="Nagahari K."/>
            <person name="Murakami K."/>
            <person name="Yasuda T."/>
            <person name="Iwayanagi T."/>
            <person name="Wagatsuma M."/>
            <person name="Shiratori A."/>
            <person name="Sudo H."/>
            <person name="Hosoiri T."/>
            <person name="Kaku Y."/>
            <person name="Kodaira H."/>
            <person name="Kondo H."/>
            <person name="Sugawara M."/>
            <person name="Takahashi M."/>
            <person name="Kanda K."/>
            <person name="Yokoi T."/>
            <person name="Furuya T."/>
            <person name="Kikkawa E."/>
            <person name="Omura Y."/>
            <person name="Abe K."/>
            <person name="Kamihara K."/>
            <person name="Katsuta N."/>
            <person name="Sato K."/>
            <person name="Tanikawa M."/>
            <person name="Yamazaki M."/>
            <person name="Ninomiya K."/>
            <person name="Ishibashi T."/>
            <person name="Yamashita H."/>
            <person name="Murakawa K."/>
            <person name="Fujimori K."/>
            <person name="Tanai H."/>
            <person name="Kimata M."/>
            <person name="Watanabe M."/>
            <person name="Hiraoka S."/>
            <person name="Chiba Y."/>
            <person name="Ishida S."/>
            <person name="Ono Y."/>
            <person name="Takiguchi S."/>
            <person name="Watanabe S."/>
            <person name="Yosida M."/>
            <person name="Hotuta T."/>
            <person name="Kusano J."/>
            <person name="Kanehori K."/>
            <person name="Takahashi-Fujii A."/>
            <person name="Hara H."/>
            <person name="Tanase T.-O."/>
            <person name="Nomura Y."/>
            <person name="Togiya S."/>
            <person name="Komai F."/>
            <person name="Hara R."/>
            <person name="Takeuchi K."/>
            <person name="Arita M."/>
            <person name="Imose N."/>
            <person name="Musashino K."/>
            <person name="Yuuki H."/>
            <person name="Oshima A."/>
            <person name="Sasaki N."/>
            <person name="Aotsuka S."/>
            <person name="Yoshikawa Y."/>
            <person name="Matsunawa H."/>
            <person name="Ichihara T."/>
            <person name="Shiohata N."/>
            <person name="Sano S."/>
            <person name="Moriya S."/>
            <person name="Momiyama H."/>
            <person name="Satoh N."/>
            <person name="Takami S."/>
            <person name="Terashima Y."/>
            <person name="Suzuki O."/>
            <person name="Nakagawa S."/>
            <person name="Senoh A."/>
            <person name="Mizoguchi H."/>
            <person name="Goto Y."/>
            <person name="Shimizu F."/>
            <person name="Wakebe H."/>
            <person name="Hishigaki H."/>
            <person name="Watanabe T."/>
            <person name="Sugiyama A."/>
            <person name="Takemoto M."/>
            <person name="Kawakami B."/>
            <person name="Yamazaki M."/>
            <person name="Watanabe K."/>
            <person name="Kumagai A."/>
            <person name="Itakura S."/>
            <person name="Fukuzumi Y."/>
            <person name="Fujimori Y."/>
            <person name="Komiyama M."/>
            <person name="Tashiro H."/>
            <person name="Tanigami A."/>
            <person name="Fujiwara T."/>
            <person name="Ono T."/>
            <person name="Yamada K."/>
            <person name="Fujii Y."/>
            <person name="Ozaki K."/>
            <person name="Hirao M."/>
            <person name="Ohmori Y."/>
            <person name="Kawabata A."/>
            <person name="Hikiji T."/>
            <person name="Kobatake N."/>
            <person name="Inagaki H."/>
            <person name="Ikema Y."/>
            <person name="Okamoto S."/>
            <person name="Okitani R."/>
            <person name="Kawakami T."/>
            <person name="Noguchi S."/>
            <person name="Itoh T."/>
            <person name="Shigeta K."/>
            <person name="Senba T."/>
            <person name="Matsumura K."/>
            <person name="Nakajima Y."/>
            <person name="Mizuno T."/>
            <person name="Morinaga M."/>
            <person name="Sasaki M."/>
            <person name="Togashi T."/>
            <person name="Oyama M."/>
            <person name="Hata H."/>
            <person name="Watanabe M."/>
            <person name="Komatsu T."/>
            <person name="Mizushima-Sugano J."/>
            <person name="Satoh T."/>
            <person name="Shirai Y."/>
            <person name="Takahashi Y."/>
            <person name="Nakagawa K."/>
            <person name="Okumura K."/>
            <person name="Nagase T."/>
            <person name="Nomura N."/>
            <person name="Kikuchi H."/>
            <person name="Masuho Y."/>
            <person name="Yamashita R."/>
            <person name="Nakai K."/>
            <person name="Yada T."/>
            <person name="Nakamura Y."/>
            <person name="Ohara O."/>
            <person name="Isogai T."/>
            <person name="Sugano S."/>
        </authorList>
    </citation>
    <scope>NUCLEOTIDE SEQUENCE [LARGE SCALE MRNA] OF 1-483</scope>
    <source>
        <tissue>Carcinoma</tissue>
    </source>
</reference>
<dbReference type="EMBL" id="BC000130">
    <property type="protein sequence ID" value="AAH00130.1"/>
    <property type="molecule type" value="mRNA"/>
</dbReference>
<dbReference type="EMBL" id="AK000564">
    <property type="protein sequence ID" value="BAA91257.1"/>
    <property type="status" value="ALT_SEQ"/>
    <property type="molecule type" value="mRNA"/>
</dbReference>
<dbReference type="CCDS" id="CCDS12954.1"/>
<dbReference type="RefSeq" id="NP_060349.1">
    <property type="nucleotide sequence ID" value="NM_017879.3"/>
</dbReference>
<dbReference type="SMR" id="Q9BWM5"/>
<dbReference type="BioGRID" id="120791">
    <property type="interactions" value="8"/>
</dbReference>
<dbReference type="FunCoup" id="Q9BWM5">
    <property type="interactions" value="32"/>
</dbReference>
<dbReference type="IntAct" id="Q9BWM5">
    <property type="interactions" value="18"/>
</dbReference>
<dbReference type="STRING" id="9606.ENSP00000196489"/>
<dbReference type="iPTMnet" id="Q9BWM5"/>
<dbReference type="PhosphoSitePlus" id="Q9BWM5"/>
<dbReference type="BioMuta" id="ZNF416"/>
<dbReference type="DMDM" id="74762716"/>
<dbReference type="jPOST" id="Q9BWM5"/>
<dbReference type="MassIVE" id="Q9BWM5"/>
<dbReference type="PaxDb" id="9606-ENSP00000196489"/>
<dbReference type="PeptideAtlas" id="Q9BWM5"/>
<dbReference type="Antibodypedia" id="19655">
    <property type="antibodies" value="100 antibodies from 20 providers"/>
</dbReference>
<dbReference type="DNASU" id="55659"/>
<dbReference type="Ensembl" id="ENST00000196489.4">
    <property type="protein sequence ID" value="ENSP00000196489.2"/>
    <property type="gene ID" value="ENSG00000083817.9"/>
</dbReference>
<dbReference type="GeneID" id="55659"/>
<dbReference type="KEGG" id="hsa:55659"/>
<dbReference type="MANE-Select" id="ENST00000196489.4">
    <property type="protein sequence ID" value="ENSP00000196489.2"/>
    <property type="RefSeq nucleotide sequence ID" value="NM_017879.3"/>
    <property type="RefSeq protein sequence ID" value="NP_060349.1"/>
</dbReference>
<dbReference type="UCSC" id="uc002qpf.4">
    <property type="organism name" value="human"/>
</dbReference>
<dbReference type="AGR" id="HGNC:20645"/>
<dbReference type="CTD" id="55659"/>
<dbReference type="GeneCards" id="ZNF416"/>
<dbReference type="HGNC" id="HGNC:20645">
    <property type="gene designation" value="ZNF416"/>
</dbReference>
<dbReference type="HPA" id="ENSG00000083817">
    <property type="expression patterns" value="Low tissue specificity"/>
</dbReference>
<dbReference type="neXtProt" id="NX_Q9BWM5"/>
<dbReference type="OpenTargets" id="ENSG00000083817"/>
<dbReference type="PharmGKB" id="PA134905500"/>
<dbReference type="VEuPathDB" id="HostDB:ENSG00000083817"/>
<dbReference type="eggNOG" id="KOG1721">
    <property type="taxonomic scope" value="Eukaryota"/>
</dbReference>
<dbReference type="GeneTree" id="ENSGT00940000164114"/>
<dbReference type="HOGENOM" id="CLU_002678_55_4_1"/>
<dbReference type="InParanoid" id="Q9BWM5"/>
<dbReference type="OMA" id="SSHKHTF"/>
<dbReference type="OrthoDB" id="1095242at2759"/>
<dbReference type="PAN-GO" id="Q9BWM5">
    <property type="GO annotations" value="4 GO annotations based on evolutionary models"/>
</dbReference>
<dbReference type="PhylomeDB" id="Q9BWM5"/>
<dbReference type="TreeFam" id="TF339848"/>
<dbReference type="PathwayCommons" id="Q9BWM5"/>
<dbReference type="Reactome" id="R-HSA-212436">
    <property type="pathway name" value="Generic Transcription Pathway"/>
</dbReference>
<dbReference type="SignaLink" id="Q9BWM5"/>
<dbReference type="BioGRID-ORCS" id="55659">
    <property type="hits" value="6 hits in 1168 CRISPR screens"/>
</dbReference>
<dbReference type="ChiTaRS" id="ZNF416">
    <property type="organism name" value="human"/>
</dbReference>
<dbReference type="GenomeRNAi" id="55659"/>
<dbReference type="Pharos" id="Q9BWM5">
    <property type="development level" value="Tdark"/>
</dbReference>
<dbReference type="PRO" id="PR:Q9BWM5"/>
<dbReference type="Proteomes" id="UP000005640">
    <property type="component" value="Chromosome 19"/>
</dbReference>
<dbReference type="RNAct" id="Q9BWM5">
    <property type="molecule type" value="protein"/>
</dbReference>
<dbReference type="Bgee" id="ENSG00000083817">
    <property type="expression patterns" value="Expressed in secondary oocyte and 129 other cell types or tissues"/>
</dbReference>
<dbReference type="GO" id="GO:0005634">
    <property type="term" value="C:nucleus"/>
    <property type="evidence" value="ECO:0000318"/>
    <property type="project" value="GO_Central"/>
</dbReference>
<dbReference type="GO" id="GO:0000981">
    <property type="term" value="F:DNA-binding transcription factor activity, RNA polymerase II-specific"/>
    <property type="evidence" value="ECO:0000318"/>
    <property type="project" value="GO_Central"/>
</dbReference>
<dbReference type="GO" id="GO:0000978">
    <property type="term" value="F:RNA polymerase II cis-regulatory region sequence-specific DNA binding"/>
    <property type="evidence" value="ECO:0000318"/>
    <property type="project" value="GO_Central"/>
</dbReference>
<dbReference type="GO" id="GO:0008270">
    <property type="term" value="F:zinc ion binding"/>
    <property type="evidence" value="ECO:0007669"/>
    <property type="project" value="UniProtKB-KW"/>
</dbReference>
<dbReference type="GO" id="GO:0006357">
    <property type="term" value="P:regulation of transcription by RNA polymerase II"/>
    <property type="evidence" value="ECO:0000318"/>
    <property type="project" value="GO_Central"/>
</dbReference>
<dbReference type="CDD" id="cd07765">
    <property type="entry name" value="KRAB_A-box"/>
    <property type="match status" value="1"/>
</dbReference>
<dbReference type="FunFam" id="3.30.160.60:FF:002716">
    <property type="entry name" value="Zinc finger protein 212"/>
    <property type="match status" value="1"/>
</dbReference>
<dbReference type="FunFam" id="3.30.160.60:FF:002343">
    <property type="entry name" value="Zinc finger protein 33A"/>
    <property type="match status" value="1"/>
</dbReference>
<dbReference type="FunFam" id="3.30.160.60:FF:000127">
    <property type="entry name" value="Zinc finger protein 354C"/>
    <property type="match status" value="1"/>
</dbReference>
<dbReference type="FunFam" id="3.30.160.60:FF:000016">
    <property type="entry name" value="zinc finger protein 37 homolog"/>
    <property type="match status" value="1"/>
</dbReference>
<dbReference type="FunFam" id="3.30.160.60:FF:000200">
    <property type="entry name" value="zinc finger protein 510 isoform X2"/>
    <property type="match status" value="2"/>
</dbReference>
<dbReference type="FunFam" id="3.30.160.60:FF:001174">
    <property type="entry name" value="zinc finger protein 527 isoform X1"/>
    <property type="match status" value="1"/>
</dbReference>
<dbReference type="FunFam" id="3.30.160.60:FF:000281">
    <property type="entry name" value="Zinc finger protein 558 isoform X1"/>
    <property type="match status" value="1"/>
</dbReference>
<dbReference type="FunFam" id="3.30.160.60:FF:001270">
    <property type="entry name" value="zinc finger protein 583 isoform X1"/>
    <property type="match status" value="1"/>
</dbReference>
<dbReference type="FunFam" id="3.30.160.60:FF:000098">
    <property type="entry name" value="Zinc finger protein 614"/>
    <property type="match status" value="1"/>
</dbReference>
<dbReference type="FunFam" id="3.30.160.60:FF:000320">
    <property type="entry name" value="Zinc finger protein 777"/>
    <property type="match status" value="1"/>
</dbReference>
<dbReference type="Gene3D" id="6.10.140.140">
    <property type="match status" value="1"/>
</dbReference>
<dbReference type="Gene3D" id="3.30.160.60">
    <property type="entry name" value="Classic Zinc Finger"/>
    <property type="match status" value="11"/>
</dbReference>
<dbReference type="InterPro" id="IPR001909">
    <property type="entry name" value="KRAB"/>
</dbReference>
<dbReference type="InterPro" id="IPR036051">
    <property type="entry name" value="KRAB_dom_sf"/>
</dbReference>
<dbReference type="InterPro" id="IPR050331">
    <property type="entry name" value="Zinc_finger"/>
</dbReference>
<dbReference type="InterPro" id="IPR036236">
    <property type="entry name" value="Znf_C2H2_sf"/>
</dbReference>
<dbReference type="InterPro" id="IPR013087">
    <property type="entry name" value="Znf_C2H2_type"/>
</dbReference>
<dbReference type="PANTHER" id="PTHR16515">
    <property type="entry name" value="PR DOMAIN ZINC FINGER PROTEIN"/>
    <property type="match status" value="1"/>
</dbReference>
<dbReference type="PANTHER" id="PTHR16515:SF58">
    <property type="entry name" value="ZINC FINGER PROTEIN 22"/>
    <property type="match status" value="1"/>
</dbReference>
<dbReference type="Pfam" id="PF01352">
    <property type="entry name" value="KRAB"/>
    <property type="match status" value="1"/>
</dbReference>
<dbReference type="Pfam" id="PF00096">
    <property type="entry name" value="zf-C2H2"/>
    <property type="match status" value="11"/>
</dbReference>
<dbReference type="SMART" id="SM00349">
    <property type="entry name" value="KRAB"/>
    <property type="match status" value="1"/>
</dbReference>
<dbReference type="SMART" id="SM00355">
    <property type="entry name" value="ZnF_C2H2"/>
    <property type="match status" value="11"/>
</dbReference>
<dbReference type="SUPFAM" id="SSF57667">
    <property type="entry name" value="beta-beta-alpha zinc fingers"/>
    <property type="match status" value="7"/>
</dbReference>
<dbReference type="SUPFAM" id="SSF109640">
    <property type="entry name" value="KRAB domain (Kruppel-associated box)"/>
    <property type="match status" value="1"/>
</dbReference>
<dbReference type="PROSITE" id="PS50805">
    <property type="entry name" value="KRAB"/>
    <property type="match status" value="1"/>
</dbReference>
<dbReference type="PROSITE" id="PS00028">
    <property type="entry name" value="ZINC_FINGER_C2H2_1"/>
    <property type="match status" value="11"/>
</dbReference>
<dbReference type="PROSITE" id="PS50157">
    <property type="entry name" value="ZINC_FINGER_C2H2_2"/>
    <property type="match status" value="12"/>
</dbReference>